<keyword id="KW-0903">Direct protein sequencing</keyword>
<keyword id="KW-0249">Electron transport</keyword>
<keyword id="KW-0285">Flavoprotein</keyword>
<keyword id="KW-0288">FMN</keyword>
<keyword id="KW-0408">Iron</keyword>
<keyword id="KW-0479">Metal-binding</keyword>
<keyword id="KW-0560">Oxidoreductase</keyword>
<keyword id="KW-1185">Reference proteome</keyword>
<keyword id="KW-0813">Transport</keyword>
<evidence type="ECO:0000250" key="1">
    <source>
        <dbReference type="UniProtKB" id="Q50497"/>
    </source>
</evidence>
<evidence type="ECO:0000255" key="2">
    <source>
        <dbReference type="PROSITE-ProRule" id="PRU00088"/>
    </source>
</evidence>
<evidence type="ECO:0000269" key="3">
    <source>
    </source>
</evidence>
<evidence type="ECO:0000303" key="4">
    <source>
    </source>
</evidence>
<evidence type="ECO:0000305" key="5"/>
<evidence type="ECO:0000305" key="6">
    <source>
    </source>
</evidence>
<organism>
    <name type="scientific">Methanothermobacter thermautotrophicus (strain ATCC 29096 / DSM 1053 / JCM 10044 / NBRC 100330 / Delta H)</name>
    <name type="common">Methanobacterium thermoautotrophicum</name>
    <dbReference type="NCBI Taxonomy" id="187420"/>
    <lineage>
        <taxon>Archaea</taxon>
        <taxon>Methanobacteriati</taxon>
        <taxon>Methanobacteriota</taxon>
        <taxon>Methanomada group</taxon>
        <taxon>Methanobacteria</taxon>
        <taxon>Methanobacteriales</taxon>
        <taxon>Methanobacteriaceae</taxon>
        <taxon>Methanothermobacter</taxon>
    </lineage>
</organism>
<feature type="chain" id="PRO_0000216807" description="Coenzyme F420H(2) oxidase">
    <location>
        <begin position="1"/>
        <end position="404"/>
    </location>
</feature>
<feature type="domain" description="Flavodoxin-like" evidence="2">
    <location>
        <begin position="259"/>
        <end position="399"/>
    </location>
</feature>
<feature type="binding site" evidence="1">
    <location>
        <position position="84"/>
    </location>
    <ligand>
        <name>Fe cation</name>
        <dbReference type="ChEBI" id="CHEBI:24875"/>
        <label>1</label>
    </ligand>
</feature>
<feature type="binding site" evidence="1">
    <location>
        <position position="86"/>
    </location>
    <ligand>
        <name>Fe cation</name>
        <dbReference type="ChEBI" id="CHEBI:24875"/>
        <label>1</label>
    </ligand>
</feature>
<feature type="binding site" evidence="1">
    <location>
        <position position="88"/>
    </location>
    <ligand>
        <name>Fe cation</name>
        <dbReference type="ChEBI" id="CHEBI:24875"/>
        <label>2</label>
    </ligand>
</feature>
<feature type="binding site" evidence="1">
    <location>
        <position position="89"/>
    </location>
    <ligand>
        <name>Fe cation</name>
        <dbReference type="ChEBI" id="CHEBI:24875"/>
        <label>2</label>
    </ligand>
</feature>
<feature type="binding site" evidence="1">
    <location>
        <position position="152"/>
    </location>
    <ligand>
        <name>Fe cation</name>
        <dbReference type="ChEBI" id="CHEBI:24875"/>
        <label>1</label>
    </ligand>
</feature>
<feature type="binding site" evidence="1">
    <location>
        <position position="170"/>
    </location>
    <ligand>
        <name>Fe cation</name>
        <dbReference type="ChEBI" id="CHEBI:24875"/>
        <label>1</label>
    </ligand>
</feature>
<feature type="binding site" evidence="1">
    <location>
        <position position="170"/>
    </location>
    <ligand>
        <name>Fe cation</name>
        <dbReference type="ChEBI" id="CHEBI:24875"/>
        <label>2</label>
    </ligand>
</feature>
<feature type="binding site" evidence="1">
    <location>
        <position position="233"/>
    </location>
    <ligand>
        <name>Fe cation</name>
        <dbReference type="ChEBI" id="CHEBI:24875"/>
        <label>2</label>
    </ligand>
</feature>
<feature type="binding site" evidence="1">
    <location>
        <begin position="265"/>
        <end position="270"/>
    </location>
    <ligand>
        <name>FMN</name>
        <dbReference type="ChEBI" id="CHEBI:58210"/>
    </ligand>
</feature>
<feature type="binding site" evidence="1">
    <location>
        <begin position="317"/>
        <end position="320"/>
    </location>
    <ligand>
        <name>FMN</name>
        <dbReference type="ChEBI" id="CHEBI:58210"/>
    </ligand>
</feature>
<feature type="binding site" evidence="1">
    <location>
        <begin position="351"/>
        <end position="356"/>
    </location>
    <ligand>
        <name>FMN</name>
        <dbReference type="ChEBI" id="CHEBI:58210"/>
    </ligand>
</feature>
<feature type="sequence conflict" description="In Ref. 3; AA sequence." evidence="5" ref="3">
    <original>W</original>
    <variation>D</variation>
    <location>
        <position position="20"/>
    </location>
</feature>
<feature type="sequence conflict" description="In Ref. 1; AAB53659." evidence="5" ref="1">
    <original>T</original>
    <variation>A</variation>
    <location>
        <position position="248"/>
    </location>
</feature>
<accession>O27404</accession>
<accession>Q50531</accession>
<name>FPRA_METTH</name>
<protein>
    <recommendedName>
        <fullName evidence="5">Coenzyme F420H(2) oxidase</fullName>
        <ecNumber evidence="1">1.5.3.22</ecNumber>
    </recommendedName>
    <alternativeName>
        <fullName>FMN protein FprA</fullName>
    </alternativeName>
    <alternativeName>
        <fullName evidence="4">Flavoprotein A</fullName>
    </alternativeName>
    <alternativeName>
        <fullName>Type A flavoprotein FprA</fullName>
    </alternativeName>
</protein>
<reference key="1">
    <citation type="journal article" date="1995" name="Eur. J. Biochem.">
        <title>Characterization of a 45-kDa flavoprotein and evidence for a rubredoxin, two proteins that could participate in electron transport from H2 to CO2 in methanogenesis in Methanobacterium thermoautotrophicum.</title>
        <authorList>
            <person name="Noelling J."/>
            <person name="Ishii M."/>
            <person name="Koch J."/>
            <person name="Pihl T.D."/>
            <person name="Reeve J.N."/>
            <person name="Thauer R.K."/>
            <person name="Hedderich R."/>
        </authorList>
    </citation>
    <scope>NUCLEOTIDE SEQUENCE [GENOMIC DNA]</scope>
    <scope>PROTEIN SEQUENCE OF 1-21</scope>
    <scope>INDUCTION</scope>
    <source>
        <strain>ATCC 29096 / DSM 1053 / JCM 10044 / NBRC 100330 / Delta H</strain>
    </source>
</reference>
<reference key="2">
    <citation type="journal article" date="1997" name="J. Bacteriol.">
        <title>Complete genome sequence of Methanobacterium thermoautotrophicum deltaH: functional analysis and comparative genomics.</title>
        <authorList>
            <person name="Smith D.R."/>
            <person name="Doucette-Stamm L.A."/>
            <person name="Deloughery C."/>
            <person name="Lee H.-M."/>
            <person name="Dubois J."/>
            <person name="Aldredge T."/>
            <person name="Bashirzadeh R."/>
            <person name="Blakely D."/>
            <person name="Cook R."/>
            <person name="Gilbert K."/>
            <person name="Harrison D."/>
            <person name="Hoang L."/>
            <person name="Keagle P."/>
            <person name="Lumm W."/>
            <person name="Pothier B."/>
            <person name="Qiu D."/>
            <person name="Spadafora R."/>
            <person name="Vicare R."/>
            <person name="Wang Y."/>
            <person name="Wierzbowski J."/>
            <person name="Gibson R."/>
            <person name="Jiwani N."/>
            <person name="Caruso A."/>
            <person name="Bush D."/>
            <person name="Safer H."/>
            <person name="Patwell D."/>
            <person name="Prabhakar S."/>
            <person name="McDougall S."/>
            <person name="Shimer G."/>
            <person name="Goyal A."/>
            <person name="Pietrovski S."/>
            <person name="Church G.M."/>
            <person name="Daniels C.J."/>
            <person name="Mao J.-I."/>
            <person name="Rice P."/>
            <person name="Noelling J."/>
            <person name="Reeve J.N."/>
        </authorList>
    </citation>
    <scope>NUCLEOTIDE SEQUENCE [LARGE SCALE GENOMIC DNA]</scope>
    <source>
        <strain>ATCC 29096 / DSM 1053 / JCM 10044 / NBRC 100330 / Delta H</strain>
    </source>
</reference>
<reference key="3">
    <citation type="journal article" date="1993" name="J. Bacteriol.">
        <title>Methyl viologen hydrogenase II, a new member of the hydrogenase family from Methanobacterium thermoautotrophicum delta H.</title>
        <authorList>
            <person name="Woo G.-J."/>
            <person name="Wasserfallen A."/>
            <person name="Wolfe R.S."/>
        </authorList>
    </citation>
    <scope>PROTEIN SEQUENCE OF 1-20</scope>
    <source>
        <strain>ATCC 29096 / DSM 1053 / JCM 10044 / NBRC 100330 / Delta H</strain>
    </source>
</reference>
<reference key="4">
    <citation type="journal article" date="1998" name="Eur. J. Biochem.">
        <title>A family of flavoproteins in the domains Archaea and Bacteria.</title>
        <authorList>
            <person name="Wasserfallen A."/>
            <person name="Ragettli S."/>
            <person name="Jouanneau Y."/>
            <person name="Leisinger T."/>
        </authorList>
    </citation>
    <scope>DISCUSSION OF FUNCTION</scope>
    <source>
        <strain>ATCC 29096 / DSM 1053 / JCM 10044 / NBRC 100330 / Delta H</strain>
    </source>
</reference>
<sequence length="404" mass="45460">MKARAEKIADGLYWTGVLDWDIRNYHGYTLQGTTYNAYLVFGDEGVALIDNSYPGTFQELMARMEDAFNREGREMRVDFIVQNHVERDHSGVLVELHRRFPEAEIHCTEVAVEGLLKHYPALEGTEFRTVKTGDSIDLGGRTLTFLEAPLLHWPDSMFTFLDTGILFSNDAFGQHLCYPQRLDTEIPEYILMDAAKKFYANLITPLSKLVLRKFDEVKELGLLDKIGMIAPSHGQIWTEPMKIIEAYTAWATGKVKKKVTVIYDTMHHSTAMMAHAIAEGAMSEGADVRVYYLHEDDRSEIVKDILDSHAIALGAPAIYDEPYPSVGDLLMYLRGLKFNRTGQRRAMVFGSMGGRGGATGTMQKLLADAGFDVMEADEIYYVPNNEELDACFEAGRRLAGDLNE</sequence>
<proteinExistence type="evidence at protein level"/>
<comment type="function">
    <text evidence="1">Catalyzes the oxidation of F420H(2) with O(2) (By similarity). May be involved in O(2) detoxification, reducing the intracellular O(2) concentration to a level allowing growth at the expense of methane formation (By similarity).</text>
</comment>
<comment type="catalytic activity">
    <reaction evidence="1">
        <text>2 reduced coenzyme F420-(gamma-L-Glu)(n) + O2 = 2 oxidized coenzyme F420-(gamma-L-Glu)(n) + 2 H2O + 2 H(+)</text>
        <dbReference type="Rhea" id="RHEA:39711"/>
        <dbReference type="Rhea" id="RHEA-COMP:12939"/>
        <dbReference type="Rhea" id="RHEA-COMP:14378"/>
        <dbReference type="ChEBI" id="CHEBI:15377"/>
        <dbReference type="ChEBI" id="CHEBI:15378"/>
        <dbReference type="ChEBI" id="CHEBI:15379"/>
        <dbReference type="ChEBI" id="CHEBI:133980"/>
        <dbReference type="ChEBI" id="CHEBI:139511"/>
        <dbReference type="EC" id="1.5.3.22"/>
    </reaction>
</comment>
<comment type="cofactor">
    <cofactor evidence="1">
        <name>FMN</name>
        <dbReference type="ChEBI" id="CHEBI:58210"/>
    </cofactor>
    <text evidence="1">Binds 1 FMN per subunit.</text>
</comment>
<comment type="cofactor">
    <cofactor evidence="1">
        <name>Fe cation</name>
        <dbReference type="ChEBI" id="CHEBI:24875"/>
    </cofactor>
    <text evidence="1">Binds 2 iron ions per subunit.</text>
</comment>
<comment type="induction">
    <text evidence="3">By iron limitation.</text>
</comment>
<comment type="similarity">
    <text evidence="5">In the N-terminal section; belongs to the zinc metallo-hydrolase group 3 family.</text>
</comment>
<comment type="caution">
    <text evidence="6">Was originally thought to be a subunit of methylviologen hydrolase II.</text>
</comment>
<comment type="sequence caution" evidence="5">
    <conflict type="erroneous initiation">
        <sequence resource="EMBL-CDS" id="AAB85827"/>
    </conflict>
</comment>
<dbReference type="EC" id="1.5.3.22" evidence="1"/>
<dbReference type="EMBL" id="U21086">
    <property type="protein sequence ID" value="AAB53659.1"/>
    <property type="molecule type" value="Genomic_DNA"/>
</dbReference>
<dbReference type="EMBL" id="AE000666">
    <property type="protein sequence ID" value="AAB85827.1"/>
    <property type="status" value="ALT_INIT"/>
    <property type="molecule type" value="Genomic_DNA"/>
</dbReference>
<dbReference type="PIR" id="S66533">
    <property type="entry name" value="S66533"/>
</dbReference>
<dbReference type="RefSeq" id="WP_048061030.1">
    <property type="nucleotide sequence ID" value="NC_000916.1"/>
</dbReference>
<dbReference type="SMR" id="O27404"/>
<dbReference type="STRING" id="187420.MTH_1350"/>
<dbReference type="PaxDb" id="187420-MTH_1350"/>
<dbReference type="EnsemblBacteria" id="AAB85827">
    <property type="protein sequence ID" value="AAB85827"/>
    <property type="gene ID" value="MTH_1350"/>
</dbReference>
<dbReference type="GeneID" id="1471067"/>
<dbReference type="KEGG" id="mth:MTH_1350"/>
<dbReference type="PATRIC" id="fig|187420.15.peg.1315"/>
<dbReference type="HOGENOM" id="CLU_017490_0_0_2"/>
<dbReference type="InParanoid" id="O27404"/>
<dbReference type="Proteomes" id="UP000005223">
    <property type="component" value="Chromosome"/>
</dbReference>
<dbReference type="GO" id="GO:0009055">
    <property type="term" value="F:electron transfer activity"/>
    <property type="evidence" value="ECO:0007669"/>
    <property type="project" value="InterPro"/>
</dbReference>
<dbReference type="GO" id="GO:0010181">
    <property type="term" value="F:FMN binding"/>
    <property type="evidence" value="ECO:0007669"/>
    <property type="project" value="InterPro"/>
</dbReference>
<dbReference type="GO" id="GO:0046872">
    <property type="term" value="F:metal ion binding"/>
    <property type="evidence" value="ECO:0007669"/>
    <property type="project" value="UniProtKB-KW"/>
</dbReference>
<dbReference type="GO" id="GO:0016491">
    <property type="term" value="F:oxidoreductase activity"/>
    <property type="evidence" value="ECO:0007669"/>
    <property type="project" value="UniProtKB-KW"/>
</dbReference>
<dbReference type="CDD" id="cd07709">
    <property type="entry name" value="flavodiiron_proteins_MBL-fold"/>
    <property type="match status" value="1"/>
</dbReference>
<dbReference type="Gene3D" id="3.40.50.360">
    <property type="match status" value="1"/>
</dbReference>
<dbReference type="Gene3D" id="3.60.15.10">
    <property type="entry name" value="Ribonuclease Z/Hydroxyacylglutathione hydrolase-like"/>
    <property type="match status" value="1"/>
</dbReference>
<dbReference type="InterPro" id="IPR008254">
    <property type="entry name" value="Flavodoxin/NO_synth"/>
</dbReference>
<dbReference type="InterPro" id="IPR029039">
    <property type="entry name" value="Flavoprotein-like_sf"/>
</dbReference>
<dbReference type="InterPro" id="IPR001279">
    <property type="entry name" value="Metallo-B-lactamas"/>
</dbReference>
<dbReference type="InterPro" id="IPR045761">
    <property type="entry name" value="ODP_dom"/>
</dbReference>
<dbReference type="InterPro" id="IPR036866">
    <property type="entry name" value="RibonucZ/Hydroxyglut_hydro"/>
</dbReference>
<dbReference type="InterPro" id="IPR016440">
    <property type="entry name" value="Rubredoxin-O_OxRdtase"/>
</dbReference>
<dbReference type="PANTHER" id="PTHR43717">
    <property type="entry name" value="ANAEROBIC NITRIC OXIDE REDUCTASE FLAVORUBREDOXIN"/>
    <property type="match status" value="1"/>
</dbReference>
<dbReference type="PANTHER" id="PTHR43717:SF1">
    <property type="entry name" value="ANAEROBIC NITRIC OXIDE REDUCTASE FLAVORUBREDOXIN"/>
    <property type="match status" value="1"/>
</dbReference>
<dbReference type="Pfam" id="PF00258">
    <property type="entry name" value="Flavodoxin_1"/>
    <property type="match status" value="1"/>
</dbReference>
<dbReference type="Pfam" id="PF19583">
    <property type="entry name" value="ODP"/>
    <property type="match status" value="1"/>
</dbReference>
<dbReference type="PIRSF" id="PIRSF005243">
    <property type="entry name" value="ROO"/>
    <property type="match status" value="1"/>
</dbReference>
<dbReference type="SMART" id="SM00849">
    <property type="entry name" value="Lactamase_B"/>
    <property type="match status" value="1"/>
</dbReference>
<dbReference type="SUPFAM" id="SSF52218">
    <property type="entry name" value="Flavoproteins"/>
    <property type="match status" value="1"/>
</dbReference>
<dbReference type="SUPFAM" id="SSF56281">
    <property type="entry name" value="Metallo-hydrolase/oxidoreductase"/>
    <property type="match status" value="1"/>
</dbReference>
<dbReference type="PROSITE" id="PS50902">
    <property type="entry name" value="FLAVODOXIN_LIKE"/>
    <property type="match status" value="1"/>
</dbReference>
<gene>
    <name evidence="4" type="primary">fpaA</name>
    <name type="synonym">fprA</name>
    <name type="ordered locus">MTH_1350</name>
</gene>